<organism>
    <name type="scientific">Macaca fascicularis</name>
    <name type="common">Crab-eating macaque</name>
    <name type="synonym">Cynomolgus monkey</name>
    <dbReference type="NCBI Taxonomy" id="9541"/>
    <lineage>
        <taxon>Eukaryota</taxon>
        <taxon>Metazoa</taxon>
        <taxon>Chordata</taxon>
        <taxon>Craniata</taxon>
        <taxon>Vertebrata</taxon>
        <taxon>Euteleostomi</taxon>
        <taxon>Mammalia</taxon>
        <taxon>Eutheria</taxon>
        <taxon>Euarchontoglires</taxon>
        <taxon>Primates</taxon>
        <taxon>Haplorrhini</taxon>
        <taxon>Catarrhini</taxon>
        <taxon>Cercopithecidae</taxon>
        <taxon>Cercopithecinae</taxon>
        <taxon>Macaca</taxon>
    </lineage>
</organism>
<dbReference type="EMBL" id="AB168667">
    <property type="protein sequence ID" value="BAE00778.1"/>
    <property type="molecule type" value="mRNA"/>
</dbReference>
<dbReference type="RefSeq" id="NP_001270382.1">
    <property type="nucleotide sequence ID" value="NM_001283453.1"/>
</dbReference>
<dbReference type="RefSeq" id="XP_045254931.1">
    <property type="nucleotide sequence ID" value="XM_045398996.2"/>
</dbReference>
<dbReference type="SMR" id="Q4R7Z4"/>
<dbReference type="STRING" id="9541.ENSMFAP00000027717"/>
<dbReference type="Ensembl" id="ENSMFAT00000092740.1">
    <property type="protein sequence ID" value="ENSMFAP00000059127.1"/>
    <property type="gene ID" value="ENSMFAG00000045160.2"/>
</dbReference>
<dbReference type="GeneID" id="101926197"/>
<dbReference type="VEuPathDB" id="HostDB:ENSMFAG00000045160"/>
<dbReference type="eggNOG" id="KOG1354">
    <property type="taxonomic scope" value="Eukaryota"/>
</dbReference>
<dbReference type="GeneTree" id="ENSGT00950000182864"/>
<dbReference type="OMA" id="NQIKWCR"/>
<dbReference type="Proteomes" id="UP000233100">
    <property type="component" value="Chromosome 8"/>
</dbReference>
<dbReference type="Bgee" id="ENSMFAG00000045160">
    <property type="expression patterns" value="Expressed in lung and 13 other cell types or tissues"/>
</dbReference>
<dbReference type="GO" id="GO:0000159">
    <property type="term" value="C:protein phosphatase type 2A complex"/>
    <property type="evidence" value="ECO:0000250"/>
    <property type="project" value="UniProtKB"/>
</dbReference>
<dbReference type="GO" id="GO:0140767">
    <property type="term" value="F:enzyme-substrate adaptor activity"/>
    <property type="evidence" value="ECO:0000250"/>
    <property type="project" value="UniProtKB"/>
</dbReference>
<dbReference type="GO" id="GO:0019888">
    <property type="term" value="F:protein phosphatase regulator activity"/>
    <property type="evidence" value="ECO:0000250"/>
    <property type="project" value="UniProtKB"/>
</dbReference>
<dbReference type="GO" id="GO:0006470">
    <property type="term" value="P:protein dephosphorylation"/>
    <property type="evidence" value="ECO:0000250"/>
    <property type="project" value="UniProtKB"/>
</dbReference>
<dbReference type="GO" id="GO:0051983">
    <property type="term" value="P:regulation of chromosome segregation"/>
    <property type="evidence" value="ECO:0000250"/>
    <property type="project" value="UniProtKB"/>
</dbReference>
<dbReference type="FunFam" id="2.130.10.10:FF:000002">
    <property type="entry name" value="Serine/threonine-protein phosphatase 2A 55 kDa regulatory subunit B"/>
    <property type="match status" value="1"/>
</dbReference>
<dbReference type="Gene3D" id="2.130.10.10">
    <property type="entry name" value="YVTN repeat-like/Quinoprotein amine dehydrogenase"/>
    <property type="match status" value="1"/>
</dbReference>
<dbReference type="InterPro" id="IPR000009">
    <property type="entry name" value="PP2A_PR55"/>
</dbReference>
<dbReference type="InterPro" id="IPR018067">
    <property type="entry name" value="PP2A_PR55_CS"/>
</dbReference>
<dbReference type="InterPro" id="IPR015943">
    <property type="entry name" value="WD40/YVTN_repeat-like_dom_sf"/>
</dbReference>
<dbReference type="InterPro" id="IPR036322">
    <property type="entry name" value="WD40_repeat_dom_sf"/>
</dbReference>
<dbReference type="InterPro" id="IPR001680">
    <property type="entry name" value="WD40_rpt"/>
</dbReference>
<dbReference type="PANTHER" id="PTHR11871">
    <property type="entry name" value="PROTEIN PHOSPHATASE PP2A REGULATORY SUBUNIT B"/>
    <property type="match status" value="1"/>
</dbReference>
<dbReference type="PIRSF" id="PIRSF037309">
    <property type="entry name" value="PP2A_PR55"/>
    <property type="match status" value="1"/>
</dbReference>
<dbReference type="PRINTS" id="PR00600">
    <property type="entry name" value="PP2APR55"/>
</dbReference>
<dbReference type="SMART" id="SM00320">
    <property type="entry name" value="WD40"/>
    <property type="match status" value="7"/>
</dbReference>
<dbReference type="SUPFAM" id="SSF50978">
    <property type="entry name" value="WD40 repeat-like"/>
    <property type="match status" value="1"/>
</dbReference>
<dbReference type="PROSITE" id="PS01024">
    <property type="entry name" value="PR55_1"/>
    <property type="match status" value="1"/>
</dbReference>
<dbReference type="PROSITE" id="PS01025">
    <property type="entry name" value="PR55_2"/>
    <property type="match status" value="1"/>
</dbReference>
<evidence type="ECO:0000250" key="1">
    <source>
        <dbReference type="UniProtKB" id="P63151"/>
    </source>
</evidence>
<evidence type="ECO:0000250" key="2">
    <source>
        <dbReference type="UniProtKB" id="Q6P1F6"/>
    </source>
</evidence>
<evidence type="ECO:0000305" key="3"/>
<name>2ABA_MACFA</name>
<reference key="1">
    <citation type="submission" date="2005-06" db="EMBL/GenBank/DDBJ databases">
        <title>DNA sequences of macaque genes expressed in brain or testis and its evolutionary implications.</title>
        <authorList>
            <consortium name="International consortium for macaque cDNA sequencing and analysis"/>
        </authorList>
    </citation>
    <scope>NUCLEOTIDE SEQUENCE [LARGE SCALE MRNA]</scope>
    <source>
        <tissue>Testis</tissue>
    </source>
</reference>
<sequence length="447" mass="51692">MAGAGGGNDIQWCFSQVKGAVDDDVAEADIISTVEFNHSGELLATGDKGGRVVIFQQEQENKIQSHSRGEYNVYSTFQSHEPEFDYLKSLEIEEKINKIRWLPQKNAAQFLLSTNDKTIKLWKISERDKRPEGYNLKEEDGRYRDPTTVTTLRVPVFRPMDLMVEASPRRIFANAHTYHINSISINSDYETYLSADDLRINLWHLEITDRSFNIVDIKPANMEELTEVITAAEFHPNSCNTFVYSSSKGTIRLCDMRASALCDRHSKLFEEPEDPSNRSFFSEIISSISDVKFSHSGRYMMTRDYLSVKIWDLNMENRPVETYQVHEYLRSKLCSLYENDCIFDKFECCWNGSDSVVMTGSYNNFFRMFDRNTKRDITLEASRENNKPRTVLKPRKVCASGKRKKDEISVDSLDFNKKILHTAWHPKENIIAVATTNNLYIFQDKVN</sequence>
<proteinExistence type="evidence at transcript level"/>
<gene>
    <name type="primary">PPP2R2A</name>
    <name type="ORF">QtsA-14009</name>
</gene>
<comment type="function">
    <text evidence="1 2">Substrate-recognition subunit of protein phosphatase 2A (PP2A) that plays a key role in cell cycle by controlling mitosis entry and exit. Involved in chromosome clustering during late mitosis by mediating dephosphorylation of MKI67 (By similarity). Essential for serine/threonine-protein phosphatase 2A-mediated dephosphorylation of WEE1, preventing its ubiquitin-mediated proteolysis, increasing WEE1 protein levels, and promoting the G2/M checkpoint (By similarity).</text>
</comment>
<comment type="subunit">
    <text evidence="1 2">PP2A consists of a common heterodimeric core enzyme, composed of a 36 kDa catalytic subunit (subunit C) and a 65 kDa constant regulatory subunit (PR65 or subunit A), that associates with a variety of regulatory subunits (By similarity). Proteins that associate with the core dimer include three families of regulatory subunits B (the R2/B/PR55/B55, R3/B''/PR72/PR130/PR59 and R5/B'/B56 families), the 48 kDa variable regulatory subunit, viral proteins, and cell signaling molecules (By similarity). Interacts with the PP2A C catalytic subunit PPP2CA (By similarity). Interacts with the PP2A A subunit PPP2R1A (By similarity). Interacts with TP53 (By similarity). Interacts with IER5 (By similarity). Interacts with MFHAS1; the interaction is direct (By similarity). Interacts with PABIR1/FAM122A (via its N-terminus); the interaction is direct and inhibits PP2A activity (By similarity). Interacts with ARPP19; the interaction is direct and inhibits PP2A activity (By similarity). Interacts with CRTC3 (By similarity).</text>
</comment>
<comment type="domain">
    <text evidence="1">Has an extended WD 2 repeat that is important for the interaction with PPP2R1A.</text>
</comment>
<comment type="similarity">
    <text evidence="3">Belongs to the phosphatase 2A regulatory subunit B family.</text>
</comment>
<feature type="initiator methionine" description="Removed" evidence="1">
    <location>
        <position position="1"/>
    </location>
</feature>
<feature type="chain" id="PRO_0000071416" description="Serine/threonine-protein phosphatase 2A 55 kDa regulatory subunit B alpha isoform">
    <location>
        <begin position="2"/>
        <end position="447"/>
    </location>
</feature>
<feature type="repeat" description="WD 1" evidence="1">
    <location>
        <begin position="11"/>
        <end position="80"/>
    </location>
</feature>
<feature type="repeat" description="WD 2" evidence="1">
    <location>
        <begin position="94"/>
        <end position="174"/>
    </location>
</feature>
<feature type="repeat" description="WD 3" evidence="1">
    <location>
        <begin position="175"/>
        <end position="218"/>
    </location>
</feature>
<feature type="repeat" description="WD 4" evidence="1">
    <location>
        <begin position="227"/>
        <end position="270"/>
    </location>
</feature>
<feature type="repeat" description="WD 5" evidence="1">
    <location>
        <begin position="288"/>
        <end position="325"/>
    </location>
</feature>
<feature type="repeat" description="WD 6" evidence="1">
    <location>
        <begin position="347"/>
        <end position="381"/>
    </location>
</feature>
<feature type="repeat" description="WD 7" evidence="1">
    <location>
        <begin position="414"/>
        <end position="446"/>
    </location>
</feature>
<feature type="modified residue" description="N-acetylalanine" evidence="1">
    <location>
        <position position="2"/>
    </location>
</feature>
<protein>
    <recommendedName>
        <fullName>Serine/threonine-protein phosphatase 2A 55 kDa regulatory subunit B alpha isoform</fullName>
    </recommendedName>
    <alternativeName>
        <fullName>PP2A subunit B isoform B55-alpha</fullName>
        <shortName evidence="1">B55</shortName>
    </alternativeName>
    <alternativeName>
        <fullName>PP2A subunit B isoform PR55-alpha</fullName>
    </alternativeName>
    <alternativeName>
        <fullName>PP2A subunit B isoform R2-alpha</fullName>
    </alternativeName>
    <alternativeName>
        <fullName>PP2A subunit B isoform alpha</fullName>
    </alternativeName>
</protein>
<accession>Q4R7Z4</accession>
<keyword id="KW-0007">Acetylation</keyword>
<keyword id="KW-1185">Reference proteome</keyword>
<keyword id="KW-0677">Repeat</keyword>
<keyword id="KW-0853">WD repeat</keyword>